<organism>
    <name type="scientific">Escherichia coli (strain UTI89 / UPEC)</name>
    <dbReference type="NCBI Taxonomy" id="364106"/>
    <lineage>
        <taxon>Bacteria</taxon>
        <taxon>Pseudomonadati</taxon>
        <taxon>Pseudomonadota</taxon>
        <taxon>Gammaproteobacteria</taxon>
        <taxon>Enterobacterales</taxon>
        <taxon>Enterobacteriaceae</taxon>
        <taxon>Escherichia</taxon>
    </lineage>
</organism>
<dbReference type="EMBL" id="CP000243">
    <property type="protein sequence ID" value="ABE09047.1"/>
    <property type="status" value="ALT_INIT"/>
    <property type="molecule type" value="Genomic_DNA"/>
</dbReference>
<dbReference type="SMR" id="Q1R6G7"/>
<dbReference type="KEGG" id="eci:UTI89_C3601"/>
<dbReference type="HOGENOM" id="CLU_070525_1_1_6"/>
<dbReference type="Proteomes" id="UP000001952">
    <property type="component" value="Chromosome"/>
</dbReference>
<dbReference type="GO" id="GO:0005829">
    <property type="term" value="C:cytosol"/>
    <property type="evidence" value="ECO:0007669"/>
    <property type="project" value="TreeGrafter"/>
</dbReference>
<dbReference type="GO" id="GO:0000028">
    <property type="term" value="P:ribosomal small subunit assembly"/>
    <property type="evidence" value="ECO:0007669"/>
    <property type="project" value="TreeGrafter"/>
</dbReference>
<dbReference type="GO" id="GO:0006412">
    <property type="term" value="P:translation"/>
    <property type="evidence" value="ECO:0007669"/>
    <property type="project" value="TreeGrafter"/>
</dbReference>
<dbReference type="CDD" id="cd01734">
    <property type="entry name" value="YlxS_C"/>
    <property type="match status" value="1"/>
</dbReference>
<dbReference type="FunFam" id="2.30.30.180:FF:000001">
    <property type="entry name" value="Ribosome maturation factor RimP"/>
    <property type="match status" value="1"/>
</dbReference>
<dbReference type="FunFam" id="3.30.300.70:FF:000001">
    <property type="entry name" value="Ribosome maturation factor RimP"/>
    <property type="match status" value="1"/>
</dbReference>
<dbReference type="Gene3D" id="2.30.30.180">
    <property type="entry name" value="Ribosome maturation factor RimP, C-terminal domain"/>
    <property type="match status" value="1"/>
</dbReference>
<dbReference type="Gene3D" id="3.30.300.70">
    <property type="entry name" value="RimP-like superfamily, N-terminal"/>
    <property type="match status" value="1"/>
</dbReference>
<dbReference type="HAMAP" id="MF_01077">
    <property type="entry name" value="RimP"/>
    <property type="match status" value="1"/>
</dbReference>
<dbReference type="InterPro" id="IPR003728">
    <property type="entry name" value="Ribosome_maturation_RimP"/>
</dbReference>
<dbReference type="InterPro" id="IPR028998">
    <property type="entry name" value="RimP_C"/>
</dbReference>
<dbReference type="InterPro" id="IPR036847">
    <property type="entry name" value="RimP_C_sf"/>
</dbReference>
<dbReference type="InterPro" id="IPR028989">
    <property type="entry name" value="RimP_N"/>
</dbReference>
<dbReference type="InterPro" id="IPR035956">
    <property type="entry name" value="RimP_N_sf"/>
</dbReference>
<dbReference type="NCBIfam" id="NF000927">
    <property type="entry name" value="PRK00092.1-1"/>
    <property type="match status" value="1"/>
</dbReference>
<dbReference type="PANTHER" id="PTHR33867">
    <property type="entry name" value="RIBOSOME MATURATION FACTOR RIMP"/>
    <property type="match status" value="1"/>
</dbReference>
<dbReference type="PANTHER" id="PTHR33867:SF1">
    <property type="entry name" value="RIBOSOME MATURATION FACTOR RIMP"/>
    <property type="match status" value="1"/>
</dbReference>
<dbReference type="Pfam" id="PF17384">
    <property type="entry name" value="DUF150_C"/>
    <property type="match status" value="1"/>
</dbReference>
<dbReference type="Pfam" id="PF02576">
    <property type="entry name" value="RimP_N"/>
    <property type="match status" value="1"/>
</dbReference>
<dbReference type="SUPFAM" id="SSF74942">
    <property type="entry name" value="YhbC-like, C-terminal domain"/>
    <property type="match status" value="1"/>
</dbReference>
<dbReference type="SUPFAM" id="SSF75420">
    <property type="entry name" value="YhbC-like, N-terminal domain"/>
    <property type="match status" value="1"/>
</dbReference>
<evidence type="ECO:0000255" key="1">
    <source>
        <dbReference type="HAMAP-Rule" id="MF_01077"/>
    </source>
</evidence>
<evidence type="ECO:0000305" key="2"/>
<keyword id="KW-0963">Cytoplasm</keyword>
<keyword id="KW-0690">Ribosome biogenesis</keyword>
<feature type="chain" id="PRO_0000384655" description="Ribosome maturation factor RimP">
    <location>
        <begin position="1"/>
        <end position="152"/>
    </location>
</feature>
<sequence>MGLSTLEQKLTEMITAPVEALGFELVGIEFIRGRTSTLRIYIDSEDGINVDDCADVSHQVSAVLDVEDPITVAYNLEVSSPGLDRPLFTAEHYARFVGEEVTLVLRMAVQNRRKWQGVIKAVDGEMITVTVEGKDEVFALSNIQKANLVPHF</sequence>
<comment type="function">
    <text evidence="1">Required for maturation of 30S ribosomal subunits.</text>
</comment>
<comment type="subcellular location">
    <subcellularLocation>
        <location evidence="1">Cytoplasm</location>
    </subcellularLocation>
</comment>
<comment type="similarity">
    <text evidence="1">Belongs to the RimP family.</text>
</comment>
<comment type="sequence caution" evidence="2">
    <conflict type="erroneous initiation">
        <sequence resource="EMBL-CDS" id="ABE09047"/>
    </conflict>
</comment>
<accession>Q1R6G7</accession>
<name>RIMP_ECOUT</name>
<reference key="1">
    <citation type="journal article" date="2006" name="Proc. Natl. Acad. Sci. U.S.A.">
        <title>Identification of genes subject to positive selection in uropathogenic strains of Escherichia coli: a comparative genomics approach.</title>
        <authorList>
            <person name="Chen S.L."/>
            <person name="Hung C.-S."/>
            <person name="Xu J."/>
            <person name="Reigstad C.S."/>
            <person name="Magrini V."/>
            <person name="Sabo A."/>
            <person name="Blasiar D."/>
            <person name="Bieri T."/>
            <person name="Meyer R.R."/>
            <person name="Ozersky P."/>
            <person name="Armstrong J.R."/>
            <person name="Fulton R.S."/>
            <person name="Latreille J.P."/>
            <person name="Spieth J."/>
            <person name="Hooton T.M."/>
            <person name="Mardis E.R."/>
            <person name="Hultgren S.J."/>
            <person name="Gordon J.I."/>
        </authorList>
    </citation>
    <scope>NUCLEOTIDE SEQUENCE [LARGE SCALE GENOMIC DNA]</scope>
    <source>
        <strain>UTI89 / UPEC</strain>
    </source>
</reference>
<proteinExistence type="inferred from homology"/>
<protein>
    <recommendedName>
        <fullName evidence="1">Ribosome maturation factor RimP</fullName>
    </recommendedName>
</protein>
<gene>
    <name evidence="1" type="primary">rimP</name>
    <name type="ordered locus">UTI89_C3601</name>
</gene>